<accession>B2VBD1</accession>
<organism>
    <name type="scientific">Erwinia tasmaniensis (strain DSM 17950 / CFBP 7177 / CIP 109463 / NCPPB 4357 / Et1/99)</name>
    <dbReference type="NCBI Taxonomy" id="465817"/>
    <lineage>
        <taxon>Bacteria</taxon>
        <taxon>Pseudomonadati</taxon>
        <taxon>Pseudomonadota</taxon>
        <taxon>Gammaproteobacteria</taxon>
        <taxon>Enterobacterales</taxon>
        <taxon>Erwiniaceae</taxon>
        <taxon>Erwinia</taxon>
    </lineage>
</organism>
<sequence length="288" mass="30718">MVAKIIDGKTIAQQVRNEVAGLVQQRLAAGKRAPGLAVVLVGENPASQIYVSSKRRACEEVGFLSRSYDLPASTSEAQLLELITQLNDDAEIDGILVQLPLPAGIDNTKVLEHISPAKDVDGFHPYNVGRLCQRAPTLRPCTPRGIVTLLERYQIDTFGLNAVVVGASNIVGRPMSMELLLAGCTTTVTHRFTKNLRQHIENADLLVVAVGKPGFIPGDWIKPGAIVIDVGINRLESGKVVGDVDFDLASTRASWITPVPGGVGPMTVATLIQNTLQACENNDNGVSA</sequence>
<feature type="chain" id="PRO_1000196770" description="Bifunctional protein FolD">
    <location>
        <begin position="1"/>
        <end position="288"/>
    </location>
</feature>
<feature type="binding site" evidence="1">
    <location>
        <begin position="166"/>
        <end position="168"/>
    </location>
    <ligand>
        <name>NADP(+)</name>
        <dbReference type="ChEBI" id="CHEBI:58349"/>
    </ligand>
</feature>
<feature type="binding site" evidence="1">
    <location>
        <position position="232"/>
    </location>
    <ligand>
        <name>NADP(+)</name>
        <dbReference type="ChEBI" id="CHEBI:58349"/>
    </ligand>
</feature>
<comment type="function">
    <text evidence="1">Catalyzes the oxidation of 5,10-methylenetetrahydrofolate to 5,10-methenyltetrahydrofolate and then the hydrolysis of 5,10-methenyltetrahydrofolate to 10-formyltetrahydrofolate.</text>
</comment>
<comment type="catalytic activity">
    <reaction evidence="1">
        <text>(6R)-5,10-methylene-5,6,7,8-tetrahydrofolate + NADP(+) = (6R)-5,10-methenyltetrahydrofolate + NADPH</text>
        <dbReference type="Rhea" id="RHEA:22812"/>
        <dbReference type="ChEBI" id="CHEBI:15636"/>
        <dbReference type="ChEBI" id="CHEBI:57455"/>
        <dbReference type="ChEBI" id="CHEBI:57783"/>
        <dbReference type="ChEBI" id="CHEBI:58349"/>
        <dbReference type="EC" id="1.5.1.5"/>
    </reaction>
</comment>
<comment type="catalytic activity">
    <reaction evidence="1">
        <text>(6R)-5,10-methenyltetrahydrofolate + H2O = (6R)-10-formyltetrahydrofolate + H(+)</text>
        <dbReference type="Rhea" id="RHEA:23700"/>
        <dbReference type="ChEBI" id="CHEBI:15377"/>
        <dbReference type="ChEBI" id="CHEBI:15378"/>
        <dbReference type="ChEBI" id="CHEBI:57455"/>
        <dbReference type="ChEBI" id="CHEBI:195366"/>
        <dbReference type="EC" id="3.5.4.9"/>
    </reaction>
</comment>
<comment type="pathway">
    <text evidence="1">One-carbon metabolism; tetrahydrofolate interconversion.</text>
</comment>
<comment type="subunit">
    <text evidence="1">Homodimer.</text>
</comment>
<comment type="similarity">
    <text evidence="1">Belongs to the tetrahydrofolate dehydrogenase/cyclohydrolase family.</text>
</comment>
<proteinExistence type="inferred from homology"/>
<gene>
    <name evidence="1" type="primary">folD</name>
    <name type="ordered locus">ETA_24340</name>
</gene>
<keyword id="KW-0028">Amino-acid biosynthesis</keyword>
<keyword id="KW-0368">Histidine biosynthesis</keyword>
<keyword id="KW-0378">Hydrolase</keyword>
<keyword id="KW-0486">Methionine biosynthesis</keyword>
<keyword id="KW-0511">Multifunctional enzyme</keyword>
<keyword id="KW-0521">NADP</keyword>
<keyword id="KW-0554">One-carbon metabolism</keyword>
<keyword id="KW-0560">Oxidoreductase</keyword>
<keyword id="KW-0658">Purine biosynthesis</keyword>
<keyword id="KW-1185">Reference proteome</keyword>
<dbReference type="EC" id="1.5.1.5" evidence="1"/>
<dbReference type="EC" id="3.5.4.9" evidence="1"/>
<dbReference type="EMBL" id="CU468135">
    <property type="protein sequence ID" value="CAO97480.1"/>
    <property type="molecule type" value="Genomic_DNA"/>
</dbReference>
<dbReference type="RefSeq" id="WP_012442147.1">
    <property type="nucleotide sequence ID" value="NC_010694.1"/>
</dbReference>
<dbReference type="SMR" id="B2VBD1"/>
<dbReference type="STRING" id="465817.ETA_24340"/>
<dbReference type="KEGG" id="eta:ETA_24340"/>
<dbReference type="eggNOG" id="COG0190">
    <property type="taxonomic scope" value="Bacteria"/>
</dbReference>
<dbReference type="HOGENOM" id="CLU_034045_2_1_6"/>
<dbReference type="OrthoDB" id="9803580at2"/>
<dbReference type="UniPathway" id="UPA00193"/>
<dbReference type="Proteomes" id="UP000001726">
    <property type="component" value="Chromosome"/>
</dbReference>
<dbReference type="GO" id="GO:0005829">
    <property type="term" value="C:cytosol"/>
    <property type="evidence" value="ECO:0007669"/>
    <property type="project" value="TreeGrafter"/>
</dbReference>
<dbReference type="GO" id="GO:0004477">
    <property type="term" value="F:methenyltetrahydrofolate cyclohydrolase activity"/>
    <property type="evidence" value="ECO:0007669"/>
    <property type="project" value="UniProtKB-UniRule"/>
</dbReference>
<dbReference type="GO" id="GO:0004488">
    <property type="term" value="F:methylenetetrahydrofolate dehydrogenase (NADP+) activity"/>
    <property type="evidence" value="ECO:0007669"/>
    <property type="project" value="UniProtKB-UniRule"/>
</dbReference>
<dbReference type="GO" id="GO:0000105">
    <property type="term" value="P:L-histidine biosynthetic process"/>
    <property type="evidence" value="ECO:0007669"/>
    <property type="project" value="UniProtKB-KW"/>
</dbReference>
<dbReference type="GO" id="GO:0009086">
    <property type="term" value="P:methionine biosynthetic process"/>
    <property type="evidence" value="ECO:0007669"/>
    <property type="project" value="UniProtKB-KW"/>
</dbReference>
<dbReference type="GO" id="GO:0006164">
    <property type="term" value="P:purine nucleotide biosynthetic process"/>
    <property type="evidence" value="ECO:0007669"/>
    <property type="project" value="UniProtKB-KW"/>
</dbReference>
<dbReference type="GO" id="GO:0035999">
    <property type="term" value="P:tetrahydrofolate interconversion"/>
    <property type="evidence" value="ECO:0007669"/>
    <property type="project" value="UniProtKB-UniRule"/>
</dbReference>
<dbReference type="CDD" id="cd01080">
    <property type="entry name" value="NAD_bind_m-THF_DH_Cyclohyd"/>
    <property type="match status" value="1"/>
</dbReference>
<dbReference type="FunFam" id="3.40.50.10860:FF:000001">
    <property type="entry name" value="Bifunctional protein FolD"/>
    <property type="match status" value="1"/>
</dbReference>
<dbReference type="FunFam" id="3.40.50.720:FF:000006">
    <property type="entry name" value="Bifunctional protein FolD"/>
    <property type="match status" value="1"/>
</dbReference>
<dbReference type="Gene3D" id="3.40.50.10860">
    <property type="entry name" value="Leucine Dehydrogenase, chain A, domain 1"/>
    <property type="match status" value="1"/>
</dbReference>
<dbReference type="Gene3D" id="3.40.50.720">
    <property type="entry name" value="NAD(P)-binding Rossmann-like Domain"/>
    <property type="match status" value="1"/>
</dbReference>
<dbReference type="HAMAP" id="MF_01576">
    <property type="entry name" value="THF_DHG_CYH"/>
    <property type="match status" value="1"/>
</dbReference>
<dbReference type="InterPro" id="IPR046346">
    <property type="entry name" value="Aminoacid_DH-like_N_sf"/>
</dbReference>
<dbReference type="InterPro" id="IPR036291">
    <property type="entry name" value="NAD(P)-bd_dom_sf"/>
</dbReference>
<dbReference type="InterPro" id="IPR000672">
    <property type="entry name" value="THF_DH/CycHdrlase"/>
</dbReference>
<dbReference type="InterPro" id="IPR020630">
    <property type="entry name" value="THF_DH/CycHdrlase_cat_dom"/>
</dbReference>
<dbReference type="InterPro" id="IPR020867">
    <property type="entry name" value="THF_DH/CycHdrlase_CS"/>
</dbReference>
<dbReference type="InterPro" id="IPR020631">
    <property type="entry name" value="THF_DH/CycHdrlase_NAD-bd_dom"/>
</dbReference>
<dbReference type="NCBIfam" id="NF008058">
    <property type="entry name" value="PRK10792.1"/>
    <property type="match status" value="1"/>
</dbReference>
<dbReference type="NCBIfam" id="NF010783">
    <property type="entry name" value="PRK14186.1"/>
    <property type="match status" value="1"/>
</dbReference>
<dbReference type="PANTHER" id="PTHR48099:SF5">
    <property type="entry name" value="C-1-TETRAHYDROFOLATE SYNTHASE, CYTOPLASMIC"/>
    <property type="match status" value="1"/>
</dbReference>
<dbReference type="PANTHER" id="PTHR48099">
    <property type="entry name" value="C-1-TETRAHYDROFOLATE SYNTHASE, CYTOPLASMIC-RELATED"/>
    <property type="match status" value="1"/>
</dbReference>
<dbReference type="Pfam" id="PF00763">
    <property type="entry name" value="THF_DHG_CYH"/>
    <property type="match status" value="1"/>
</dbReference>
<dbReference type="Pfam" id="PF02882">
    <property type="entry name" value="THF_DHG_CYH_C"/>
    <property type="match status" value="1"/>
</dbReference>
<dbReference type="PRINTS" id="PR00085">
    <property type="entry name" value="THFDHDRGNASE"/>
</dbReference>
<dbReference type="SUPFAM" id="SSF53223">
    <property type="entry name" value="Aminoacid dehydrogenase-like, N-terminal domain"/>
    <property type="match status" value="1"/>
</dbReference>
<dbReference type="SUPFAM" id="SSF51735">
    <property type="entry name" value="NAD(P)-binding Rossmann-fold domains"/>
    <property type="match status" value="1"/>
</dbReference>
<dbReference type="PROSITE" id="PS00766">
    <property type="entry name" value="THF_DHG_CYH_1"/>
    <property type="match status" value="1"/>
</dbReference>
<dbReference type="PROSITE" id="PS00767">
    <property type="entry name" value="THF_DHG_CYH_2"/>
    <property type="match status" value="1"/>
</dbReference>
<reference key="1">
    <citation type="journal article" date="2008" name="Environ. Microbiol.">
        <title>The genome of Erwinia tasmaniensis strain Et1/99, a non-pathogenic bacterium in the genus Erwinia.</title>
        <authorList>
            <person name="Kube M."/>
            <person name="Migdoll A.M."/>
            <person name="Mueller I."/>
            <person name="Kuhl H."/>
            <person name="Beck A."/>
            <person name="Reinhardt R."/>
            <person name="Geider K."/>
        </authorList>
    </citation>
    <scope>NUCLEOTIDE SEQUENCE [LARGE SCALE GENOMIC DNA]</scope>
    <source>
        <strain>DSM 17950 / CFBP 7177 / CIP 109463 / NCPPB 4357 / Et1/99</strain>
    </source>
</reference>
<evidence type="ECO:0000255" key="1">
    <source>
        <dbReference type="HAMAP-Rule" id="MF_01576"/>
    </source>
</evidence>
<name>FOLD_ERWT9</name>
<protein>
    <recommendedName>
        <fullName evidence="1">Bifunctional protein FolD</fullName>
    </recommendedName>
    <domain>
        <recommendedName>
            <fullName evidence="1">Methylenetetrahydrofolate dehydrogenase</fullName>
            <ecNumber evidence="1">1.5.1.5</ecNumber>
        </recommendedName>
    </domain>
    <domain>
        <recommendedName>
            <fullName evidence="1">Methenyltetrahydrofolate cyclohydrolase</fullName>
            <ecNumber evidence="1">3.5.4.9</ecNumber>
        </recommendedName>
    </domain>
</protein>